<feature type="chain" id="PRO_0000430629" description="Ribosomal L1 domain-containing protein 1">
    <location>
        <begin position="1"/>
        <end position="452"/>
    </location>
</feature>
<feature type="region of interest" description="Disordered" evidence="3">
    <location>
        <begin position="283"/>
        <end position="452"/>
    </location>
</feature>
<feature type="coiled-coil region" evidence="2">
    <location>
        <begin position="277"/>
        <end position="350"/>
    </location>
</feature>
<feature type="compositionally biased region" description="Basic and acidic residues" evidence="3">
    <location>
        <begin position="292"/>
        <end position="301"/>
    </location>
</feature>
<feature type="compositionally biased region" description="Polar residues" evidence="3">
    <location>
        <begin position="309"/>
        <end position="319"/>
    </location>
</feature>
<feature type="compositionally biased region" description="Basic residues" evidence="3">
    <location>
        <begin position="330"/>
        <end position="341"/>
    </location>
</feature>
<feature type="compositionally biased region" description="Basic and acidic residues" evidence="3">
    <location>
        <begin position="414"/>
        <end position="423"/>
    </location>
</feature>
<feature type="compositionally biased region" description="Polar residues" evidence="3">
    <location>
        <begin position="425"/>
        <end position="440"/>
    </location>
</feature>
<feature type="modified residue" description="N-acetylmethionine" evidence="1">
    <location>
        <position position="1"/>
    </location>
</feature>
<feature type="modified residue" description="Phosphothreonine" evidence="1">
    <location>
        <position position="334"/>
    </location>
</feature>
<feature type="modified residue" description="Phosphothreonine" evidence="1">
    <location>
        <position position="344"/>
    </location>
</feature>
<feature type="modified residue" description="Phosphothreonine" evidence="1">
    <location>
        <position position="360"/>
    </location>
</feature>
<feature type="modified residue" description="Phosphothreonine" evidence="6">
    <location>
        <position position="399"/>
    </location>
</feature>
<feature type="modified residue" description="Phosphothreonine" evidence="1">
    <location>
        <position position="407"/>
    </location>
</feature>
<feature type="modified residue" description="Phosphothreonine" evidence="1">
    <location>
        <position position="429"/>
    </location>
</feature>
<feature type="modified residue" description="N6-acetyllysine" evidence="1">
    <location>
        <position position="432"/>
    </location>
</feature>
<feature type="modified residue" description="Phosphoserine" evidence="1">
    <location>
        <position position="433"/>
    </location>
</feature>
<feature type="cross-link" description="Glycyl lysine isopeptide (Lys-Gly) (interchain with G-Cter in SUMO2)" evidence="1">
    <location>
        <position position="119"/>
    </location>
</feature>
<feature type="cross-link" description="Glycyl lysine isopeptide (Lys-Gly) (interchain with G-Cter in SUMO2)" evidence="1">
    <location>
        <position position="253"/>
    </location>
</feature>
<organism>
    <name type="scientific">Mus musculus</name>
    <name type="common">Mouse</name>
    <dbReference type="NCBI Taxonomy" id="10090"/>
    <lineage>
        <taxon>Eukaryota</taxon>
        <taxon>Metazoa</taxon>
        <taxon>Chordata</taxon>
        <taxon>Craniata</taxon>
        <taxon>Vertebrata</taxon>
        <taxon>Euteleostomi</taxon>
        <taxon>Mammalia</taxon>
        <taxon>Eutheria</taxon>
        <taxon>Euarchontoglires</taxon>
        <taxon>Glires</taxon>
        <taxon>Rodentia</taxon>
        <taxon>Myomorpha</taxon>
        <taxon>Muroidea</taxon>
        <taxon>Muridae</taxon>
        <taxon>Murinae</taxon>
        <taxon>Mus</taxon>
        <taxon>Mus</taxon>
    </lineage>
</organism>
<sequence length="452" mass="50421">MKGSASESPSASVAEATTTDVQVTPTALLQLDREQIRKAVEVISNRSKSKKNNNELLLSGSENLFLMVILWKIPEKELRVKVPLPHSILSESSDVCLFTKDEFDSPEQTEGFYKKLLKKHGVNTISQIIPFKTLKTEYKAYEAKLRLLGSFEVFITDARIRRHLPSHIGRHFYQRKKVPVSVNLLAKNLSKEINRCITGTVLNISKRGSCSTIRIGHTGMETEHIVDNILAVSEMLSEKLPEKWQSVKLLFLKTEKSVSLPIFSSFVTSQDENAVSLRSLRKQELKKRKRENAKLKKESKMLRKKSKKATSLLTQSGLASSAPAKSPGAQKKKTNKAHKKQKVTEECEEAIPQLVPIGETPDKENVKMQENITGKTPKSKSDPSTPKGKKRKALLATETPEASAPGTSGKKQKKDVQEFRKPEASSFSTPRKSGKKASNTPRDKKTKAAHSN</sequence>
<dbReference type="EMBL" id="AK075933">
    <property type="protein sequence ID" value="BAC36063.1"/>
    <property type="molecule type" value="mRNA"/>
</dbReference>
<dbReference type="EMBL" id="AK136025">
    <property type="protein sequence ID" value="BAE22779.1"/>
    <property type="molecule type" value="mRNA"/>
</dbReference>
<dbReference type="EMBL" id="AK166579">
    <property type="protein sequence ID" value="BAE38868.1"/>
    <property type="molecule type" value="mRNA"/>
</dbReference>
<dbReference type="EMBL" id="BC034355">
    <property type="protein sequence ID" value="AAH34355.1"/>
    <property type="status" value="ALT_FRAME"/>
    <property type="molecule type" value="mRNA"/>
</dbReference>
<dbReference type="EMBL" id="AC087541">
    <property type="status" value="NOT_ANNOTATED_CDS"/>
    <property type="molecule type" value="Genomic_DNA"/>
</dbReference>
<dbReference type="CCDS" id="CCDS49763.1"/>
<dbReference type="RefSeq" id="NP_079822.1">
    <property type="nucleotide sequence ID" value="NM_025546.2"/>
</dbReference>
<dbReference type="SMR" id="Q8BVY0"/>
<dbReference type="BioGRID" id="211453">
    <property type="interactions" value="28"/>
</dbReference>
<dbReference type="FunCoup" id="Q8BVY0">
    <property type="interactions" value="2761"/>
</dbReference>
<dbReference type="IntAct" id="Q8BVY0">
    <property type="interactions" value="3"/>
</dbReference>
<dbReference type="MINT" id="Q8BVY0"/>
<dbReference type="STRING" id="10090.ENSMUSP00000113431"/>
<dbReference type="GlyGen" id="Q8BVY0">
    <property type="glycosylation" value="3 sites, 2 N-linked glycans (2 sites), 1 O-linked glycan (1 site)"/>
</dbReference>
<dbReference type="iPTMnet" id="Q8BVY0"/>
<dbReference type="PhosphoSitePlus" id="Q8BVY0"/>
<dbReference type="SwissPalm" id="Q8BVY0"/>
<dbReference type="jPOST" id="Q8BVY0"/>
<dbReference type="PaxDb" id="10090-ENSMUSP00000113431"/>
<dbReference type="ProteomicsDB" id="253308"/>
<dbReference type="Pumba" id="Q8BVY0"/>
<dbReference type="Antibodypedia" id="11546">
    <property type="antibodies" value="147 antibodies from 29 providers"/>
</dbReference>
<dbReference type="Ensembl" id="ENSMUST00000119953.2">
    <property type="protein sequence ID" value="ENSMUSP00000113431.2"/>
    <property type="gene ID" value="ENSMUSG00000005846.13"/>
</dbReference>
<dbReference type="GeneID" id="66409"/>
<dbReference type="KEGG" id="mmu:66409"/>
<dbReference type="UCSC" id="uc007yfb.1">
    <property type="organism name" value="mouse"/>
</dbReference>
<dbReference type="AGR" id="MGI:1913659"/>
<dbReference type="CTD" id="26156"/>
<dbReference type="MGI" id="MGI:1913659">
    <property type="gene designation" value="Rsl1d1"/>
</dbReference>
<dbReference type="VEuPathDB" id="HostDB:ENSMUSG00000005846"/>
<dbReference type="eggNOG" id="KOG1685">
    <property type="taxonomic scope" value="Eukaryota"/>
</dbReference>
<dbReference type="GeneTree" id="ENSGT00440000038603"/>
<dbReference type="HOGENOM" id="CLU_026457_0_0_1"/>
<dbReference type="InParanoid" id="Q8BVY0"/>
<dbReference type="OMA" id="GHTGMQA"/>
<dbReference type="OrthoDB" id="10251727at2759"/>
<dbReference type="PhylomeDB" id="Q8BVY0"/>
<dbReference type="TreeFam" id="TF354254"/>
<dbReference type="BioGRID-ORCS" id="66409">
    <property type="hits" value="28 hits in 78 CRISPR screens"/>
</dbReference>
<dbReference type="ChiTaRS" id="Rsl1d1">
    <property type="organism name" value="mouse"/>
</dbReference>
<dbReference type="PRO" id="PR:Q8BVY0"/>
<dbReference type="Proteomes" id="UP000000589">
    <property type="component" value="Chromosome 16"/>
</dbReference>
<dbReference type="RNAct" id="Q8BVY0">
    <property type="molecule type" value="protein"/>
</dbReference>
<dbReference type="Bgee" id="ENSMUSG00000005846">
    <property type="expression patterns" value="Expressed in embryonic post-anal tail and 259 other cell types or tissues"/>
</dbReference>
<dbReference type="ExpressionAtlas" id="Q8BVY0">
    <property type="expression patterns" value="baseline and differential"/>
</dbReference>
<dbReference type="GO" id="GO:0005694">
    <property type="term" value="C:chromosome"/>
    <property type="evidence" value="ECO:0007669"/>
    <property type="project" value="Ensembl"/>
</dbReference>
<dbReference type="GO" id="GO:0005929">
    <property type="term" value="C:cilium"/>
    <property type="evidence" value="ECO:0007669"/>
    <property type="project" value="Ensembl"/>
</dbReference>
<dbReference type="GO" id="GO:0005829">
    <property type="term" value="C:cytosol"/>
    <property type="evidence" value="ECO:0007669"/>
    <property type="project" value="Ensembl"/>
</dbReference>
<dbReference type="GO" id="GO:0005730">
    <property type="term" value="C:nucleolus"/>
    <property type="evidence" value="ECO:0000314"/>
    <property type="project" value="MGI"/>
</dbReference>
<dbReference type="GO" id="GO:0003730">
    <property type="term" value="F:mRNA 3'-UTR binding"/>
    <property type="evidence" value="ECO:0007669"/>
    <property type="project" value="Ensembl"/>
</dbReference>
<dbReference type="GO" id="GO:0048027">
    <property type="term" value="F:mRNA 5'-UTR binding"/>
    <property type="evidence" value="ECO:0007669"/>
    <property type="project" value="Ensembl"/>
</dbReference>
<dbReference type="GO" id="GO:0042981">
    <property type="term" value="P:regulation of apoptotic process"/>
    <property type="evidence" value="ECO:0000250"/>
    <property type="project" value="UniProtKB"/>
</dbReference>
<dbReference type="GO" id="GO:2000772">
    <property type="term" value="P:regulation of cellular senescence"/>
    <property type="evidence" value="ECO:0000250"/>
    <property type="project" value="UniProtKB"/>
</dbReference>
<dbReference type="GO" id="GO:0032880">
    <property type="term" value="P:regulation of protein localization"/>
    <property type="evidence" value="ECO:0000266"/>
    <property type="project" value="MGI"/>
</dbReference>
<dbReference type="CDD" id="cd00403">
    <property type="entry name" value="Ribosomal_L1"/>
    <property type="match status" value="1"/>
</dbReference>
<dbReference type="FunFam" id="3.40.50.790:FF:000004">
    <property type="entry name" value="Ribosomal L1 domain-containing 1-like 1"/>
    <property type="match status" value="1"/>
</dbReference>
<dbReference type="Gene3D" id="3.30.190.20">
    <property type="match status" value="1"/>
</dbReference>
<dbReference type="Gene3D" id="3.40.50.790">
    <property type="match status" value="1"/>
</dbReference>
<dbReference type="InterPro" id="IPR050257">
    <property type="entry name" value="eL8/uL1-like"/>
</dbReference>
<dbReference type="InterPro" id="IPR023674">
    <property type="entry name" value="Ribosomal_uL1-like"/>
</dbReference>
<dbReference type="InterPro" id="IPR028364">
    <property type="entry name" value="Ribosomal_uL1/biogenesis"/>
</dbReference>
<dbReference type="InterPro" id="IPR016095">
    <property type="entry name" value="Ribosomal_uL1_3-a/b-sand"/>
</dbReference>
<dbReference type="PANTHER" id="PTHR23105">
    <property type="entry name" value="RIBOSOMAL PROTEIN L7AE FAMILY MEMBER"/>
    <property type="match status" value="1"/>
</dbReference>
<dbReference type="Pfam" id="PF00687">
    <property type="entry name" value="Ribosomal_L1"/>
    <property type="match status" value="1"/>
</dbReference>
<dbReference type="SUPFAM" id="SSF56808">
    <property type="entry name" value="Ribosomal protein L1"/>
    <property type="match status" value="1"/>
</dbReference>
<evidence type="ECO:0000250" key="1">
    <source>
        <dbReference type="UniProtKB" id="O76021"/>
    </source>
</evidence>
<evidence type="ECO:0000255" key="2"/>
<evidence type="ECO:0000256" key="3">
    <source>
        <dbReference type="SAM" id="MobiDB-lite"/>
    </source>
</evidence>
<evidence type="ECO:0000305" key="4"/>
<evidence type="ECO:0000312" key="5">
    <source>
        <dbReference type="MGI" id="MGI:1913659"/>
    </source>
</evidence>
<evidence type="ECO:0007744" key="6">
    <source>
    </source>
</evidence>
<gene>
    <name evidence="5" type="primary">Rsl1d1</name>
</gene>
<reference key="1">
    <citation type="journal article" date="2005" name="Science">
        <title>The transcriptional landscape of the mammalian genome.</title>
        <authorList>
            <person name="Carninci P."/>
            <person name="Kasukawa T."/>
            <person name="Katayama S."/>
            <person name="Gough J."/>
            <person name="Frith M.C."/>
            <person name="Maeda N."/>
            <person name="Oyama R."/>
            <person name="Ravasi T."/>
            <person name="Lenhard B."/>
            <person name="Wells C."/>
            <person name="Kodzius R."/>
            <person name="Shimokawa K."/>
            <person name="Bajic V.B."/>
            <person name="Brenner S.E."/>
            <person name="Batalov S."/>
            <person name="Forrest A.R."/>
            <person name="Zavolan M."/>
            <person name="Davis M.J."/>
            <person name="Wilming L.G."/>
            <person name="Aidinis V."/>
            <person name="Allen J.E."/>
            <person name="Ambesi-Impiombato A."/>
            <person name="Apweiler R."/>
            <person name="Aturaliya R.N."/>
            <person name="Bailey T.L."/>
            <person name="Bansal M."/>
            <person name="Baxter L."/>
            <person name="Beisel K.W."/>
            <person name="Bersano T."/>
            <person name="Bono H."/>
            <person name="Chalk A.M."/>
            <person name="Chiu K.P."/>
            <person name="Choudhary V."/>
            <person name="Christoffels A."/>
            <person name="Clutterbuck D.R."/>
            <person name="Crowe M.L."/>
            <person name="Dalla E."/>
            <person name="Dalrymple B.P."/>
            <person name="de Bono B."/>
            <person name="Della Gatta G."/>
            <person name="di Bernardo D."/>
            <person name="Down T."/>
            <person name="Engstrom P."/>
            <person name="Fagiolini M."/>
            <person name="Faulkner G."/>
            <person name="Fletcher C.F."/>
            <person name="Fukushima T."/>
            <person name="Furuno M."/>
            <person name="Futaki S."/>
            <person name="Gariboldi M."/>
            <person name="Georgii-Hemming P."/>
            <person name="Gingeras T.R."/>
            <person name="Gojobori T."/>
            <person name="Green R.E."/>
            <person name="Gustincich S."/>
            <person name="Harbers M."/>
            <person name="Hayashi Y."/>
            <person name="Hensch T.K."/>
            <person name="Hirokawa N."/>
            <person name="Hill D."/>
            <person name="Huminiecki L."/>
            <person name="Iacono M."/>
            <person name="Ikeo K."/>
            <person name="Iwama A."/>
            <person name="Ishikawa T."/>
            <person name="Jakt M."/>
            <person name="Kanapin A."/>
            <person name="Katoh M."/>
            <person name="Kawasawa Y."/>
            <person name="Kelso J."/>
            <person name="Kitamura H."/>
            <person name="Kitano H."/>
            <person name="Kollias G."/>
            <person name="Krishnan S.P."/>
            <person name="Kruger A."/>
            <person name="Kummerfeld S.K."/>
            <person name="Kurochkin I.V."/>
            <person name="Lareau L.F."/>
            <person name="Lazarevic D."/>
            <person name="Lipovich L."/>
            <person name="Liu J."/>
            <person name="Liuni S."/>
            <person name="McWilliam S."/>
            <person name="Madan Babu M."/>
            <person name="Madera M."/>
            <person name="Marchionni L."/>
            <person name="Matsuda H."/>
            <person name="Matsuzawa S."/>
            <person name="Miki H."/>
            <person name="Mignone F."/>
            <person name="Miyake S."/>
            <person name="Morris K."/>
            <person name="Mottagui-Tabar S."/>
            <person name="Mulder N."/>
            <person name="Nakano N."/>
            <person name="Nakauchi H."/>
            <person name="Ng P."/>
            <person name="Nilsson R."/>
            <person name="Nishiguchi S."/>
            <person name="Nishikawa S."/>
            <person name="Nori F."/>
            <person name="Ohara O."/>
            <person name="Okazaki Y."/>
            <person name="Orlando V."/>
            <person name="Pang K.C."/>
            <person name="Pavan W.J."/>
            <person name="Pavesi G."/>
            <person name="Pesole G."/>
            <person name="Petrovsky N."/>
            <person name="Piazza S."/>
            <person name="Reed J."/>
            <person name="Reid J.F."/>
            <person name="Ring B.Z."/>
            <person name="Ringwald M."/>
            <person name="Rost B."/>
            <person name="Ruan Y."/>
            <person name="Salzberg S.L."/>
            <person name="Sandelin A."/>
            <person name="Schneider C."/>
            <person name="Schoenbach C."/>
            <person name="Sekiguchi K."/>
            <person name="Semple C.A."/>
            <person name="Seno S."/>
            <person name="Sessa L."/>
            <person name="Sheng Y."/>
            <person name="Shibata Y."/>
            <person name="Shimada H."/>
            <person name="Shimada K."/>
            <person name="Silva D."/>
            <person name="Sinclair B."/>
            <person name="Sperling S."/>
            <person name="Stupka E."/>
            <person name="Sugiura K."/>
            <person name="Sultana R."/>
            <person name="Takenaka Y."/>
            <person name="Taki K."/>
            <person name="Tammoja K."/>
            <person name="Tan S.L."/>
            <person name="Tang S."/>
            <person name="Taylor M.S."/>
            <person name="Tegner J."/>
            <person name="Teichmann S.A."/>
            <person name="Ueda H.R."/>
            <person name="van Nimwegen E."/>
            <person name="Verardo R."/>
            <person name="Wei C.L."/>
            <person name="Yagi K."/>
            <person name="Yamanishi H."/>
            <person name="Zabarovsky E."/>
            <person name="Zhu S."/>
            <person name="Zimmer A."/>
            <person name="Hide W."/>
            <person name="Bult C."/>
            <person name="Grimmond S.M."/>
            <person name="Teasdale R.D."/>
            <person name="Liu E.T."/>
            <person name="Brusic V."/>
            <person name="Quackenbush J."/>
            <person name="Wahlestedt C."/>
            <person name="Mattick J.S."/>
            <person name="Hume D.A."/>
            <person name="Kai C."/>
            <person name="Sasaki D."/>
            <person name="Tomaru Y."/>
            <person name="Fukuda S."/>
            <person name="Kanamori-Katayama M."/>
            <person name="Suzuki M."/>
            <person name="Aoki J."/>
            <person name="Arakawa T."/>
            <person name="Iida J."/>
            <person name="Imamura K."/>
            <person name="Itoh M."/>
            <person name="Kato T."/>
            <person name="Kawaji H."/>
            <person name="Kawagashira N."/>
            <person name="Kawashima T."/>
            <person name="Kojima M."/>
            <person name="Kondo S."/>
            <person name="Konno H."/>
            <person name="Nakano K."/>
            <person name="Ninomiya N."/>
            <person name="Nishio T."/>
            <person name="Okada M."/>
            <person name="Plessy C."/>
            <person name="Shibata K."/>
            <person name="Shiraki T."/>
            <person name="Suzuki S."/>
            <person name="Tagami M."/>
            <person name="Waki K."/>
            <person name="Watahiki A."/>
            <person name="Okamura-Oho Y."/>
            <person name="Suzuki H."/>
            <person name="Kawai J."/>
            <person name="Hayashizaki Y."/>
        </authorList>
    </citation>
    <scope>NUCLEOTIDE SEQUENCE [LARGE SCALE MRNA]</scope>
    <source>
        <strain>C57BL/6J</strain>
    </source>
</reference>
<reference key="2">
    <citation type="journal article" date="2009" name="PLoS Biol.">
        <title>Lineage-specific biology revealed by a finished genome assembly of the mouse.</title>
        <authorList>
            <person name="Church D.M."/>
            <person name="Goodstadt L."/>
            <person name="Hillier L.W."/>
            <person name="Zody M.C."/>
            <person name="Goldstein S."/>
            <person name="She X."/>
            <person name="Bult C.J."/>
            <person name="Agarwala R."/>
            <person name="Cherry J.L."/>
            <person name="DiCuccio M."/>
            <person name="Hlavina W."/>
            <person name="Kapustin Y."/>
            <person name="Meric P."/>
            <person name="Maglott D."/>
            <person name="Birtle Z."/>
            <person name="Marques A.C."/>
            <person name="Graves T."/>
            <person name="Zhou S."/>
            <person name="Teague B."/>
            <person name="Potamousis K."/>
            <person name="Churas C."/>
            <person name="Place M."/>
            <person name="Herschleb J."/>
            <person name="Runnheim R."/>
            <person name="Forrest D."/>
            <person name="Amos-Landgraf J."/>
            <person name="Schwartz D.C."/>
            <person name="Cheng Z."/>
            <person name="Lindblad-Toh K."/>
            <person name="Eichler E.E."/>
            <person name="Ponting C.P."/>
        </authorList>
    </citation>
    <scope>NUCLEOTIDE SEQUENCE [LARGE SCALE GENOMIC DNA]</scope>
    <source>
        <strain>C57BL/6J</strain>
    </source>
</reference>
<reference key="3">
    <citation type="journal article" date="2004" name="Genome Res.">
        <title>The status, quality, and expansion of the NIH full-length cDNA project: the Mammalian Gene Collection (MGC).</title>
        <authorList>
            <consortium name="The MGC Project Team"/>
        </authorList>
    </citation>
    <scope>NUCLEOTIDE SEQUENCE [LARGE SCALE MRNA]</scope>
    <source>
        <strain>Czech II</strain>
        <tissue>Mammary tumor</tissue>
    </source>
</reference>
<reference key="4">
    <citation type="journal article" date="2010" name="Cell">
        <title>A tissue-specific atlas of mouse protein phosphorylation and expression.</title>
        <authorList>
            <person name="Huttlin E.L."/>
            <person name="Jedrychowski M.P."/>
            <person name="Elias J.E."/>
            <person name="Goswami T."/>
            <person name="Rad R."/>
            <person name="Beausoleil S.A."/>
            <person name="Villen J."/>
            <person name="Haas W."/>
            <person name="Sowa M.E."/>
            <person name="Gygi S.P."/>
        </authorList>
    </citation>
    <scope>PHOSPHORYLATION [LARGE SCALE ANALYSIS] AT THR-399</scope>
    <scope>IDENTIFICATION BY MASS SPECTROMETRY [LARGE SCALE ANALYSIS]</scope>
    <source>
        <tissue>Pancreas</tissue>
        <tissue>Spleen</tissue>
        <tissue>Testis</tissue>
    </source>
</reference>
<proteinExistence type="evidence at protein level"/>
<name>RL1D1_MOUSE</name>
<accession>Q8BVY0</accession>
<accession>Q8K235</accession>
<protein>
    <recommendedName>
        <fullName>Ribosomal L1 domain-containing protein 1</fullName>
    </recommendedName>
</protein>
<keyword id="KW-0007">Acetylation</keyword>
<keyword id="KW-0175">Coiled coil</keyword>
<keyword id="KW-1017">Isopeptide bond</keyword>
<keyword id="KW-0539">Nucleus</keyword>
<keyword id="KW-0597">Phosphoprotein</keyword>
<keyword id="KW-1185">Reference proteome</keyword>
<keyword id="KW-0832">Ubl conjugation</keyword>
<comment type="function">
    <text evidence="1">Regulates cellular senescence through inhibition of PTEN translation. Acts as a pro-apoptotic regulator in response to DNA damage.</text>
</comment>
<comment type="subunit">
    <text evidence="1">Interacts with ING1 (By similarity). Interacts with KPNA7 and KPNA2 (By similarity).</text>
</comment>
<comment type="subcellular location">
    <subcellularLocation>
        <location evidence="1">Nucleus</location>
        <location evidence="1">Nucleolus</location>
    </subcellularLocation>
</comment>
<comment type="similarity">
    <text evidence="4">Belongs to the universal ribosomal protein uL1 family. Highly divergent.</text>
</comment>
<comment type="sequence caution" evidence="4">
    <conflict type="frameshift">
        <sequence resource="EMBL-CDS" id="AAH34355"/>
    </conflict>
</comment>